<proteinExistence type="inferred from homology"/>
<accession>B1NKT0</accession>
<dbReference type="EMBL" id="EF583038">
    <property type="protein sequence ID" value="ABU87847.1"/>
    <property type="molecule type" value="Genomic_RNA"/>
</dbReference>
<dbReference type="SMR" id="B1NKT0"/>
<dbReference type="Proteomes" id="UP000007047">
    <property type="component" value="Genome"/>
</dbReference>
<dbReference type="GO" id="GO:0039616">
    <property type="term" value="C:T=2 icosahedral viral capsid"/>
    <property type="evidence" value="ECO:0007669"/>
    <property type="project" value="UniProtKB-UniRule"/>
</dbReference>
<dbReference type="GO" id="GO:0039625">
    <property type="term" value="C:viral inner capsid"/>
    <property type="evidence" value="ECO:0007669"/>
    <property type="project" value="UniProtKB-UniRule"/>
</dbReference>
<dbReference type="GO" id="GO:0019013">
    <property type="term" value="C:viral nucleocapsid"/>
    <property type="evidence" value="ECO:0007669"/>
    <property type="project" value="UniProtKB-UniRule"/>
</dbReference>
<dbReference type="GO" id="GO:0003723">
    <property type="term" value="F:RNA binding"/>
    <property type="evidence" value="ECO:0007669"/>
    <property type="project" value="UniProtKB-UniRule"/>
</dbReference>
<dbReference type="HAMAP" id="MF_04123">
    <property type="entry name" value="Rota_VP2"/>
    <property type="match status" value="1"/>
</dbReference>
<dbReference type="HAMAP" id="MF_04127">
    <property type="entry name" value="Rota_VP2_A"/>
    <property type="match status" value="1"/>
</dbReference>
<dbReference type="InterPro" id="IPR007779">
    <property type="entry name" value="Rotavirus_VP2"/>
</dbReference>
<dbReference type="Pfam" id="PF05087">
    <property type="entry name" value="Rota_VP2"/>
    <property type="match status" value="1"/>
</dbReference>
<keyword id="KW-0167">Capsid protein</keyword>
<keyword id="KW-1153">Inner capsid protein</keyword>
<keyword id="KW-0677">Repeat</keyword>
<keyword id="KW-0694">RNA-binding</keyword>
<keyword id="KW-1141">T=2 icosahedral capsid protein</keyword>
<keyword id="KW-0832">Ubl conjugation</keyword>
<keyword id="KW-0946">Virion</keyword>
<organism>
    <name type="scientific">Rotavirus A (strain RVA/Human/United States/P/1974/G3P1A[8])</name>
    <name type="common">RV-A</name>
    <dbReference type="NCBI Taxonomy" id="10957"/>
    <lineage>
        <taxon>Viruses</taxon>
        <taxon>Riboviria</taxon>
        <taxon>Orthornavirae</taxon>
        <taxon>Duplornaviricota</taxon>
        <taxon>Resentoviricetes</taxon>
        <taxon>Reovirales</taxon>
        <taxon>Sedoreoviridae</taxon>
        <taxon>Rotavirus</taxon>
        <taxon>Rotavirus A</taxon>
    </lineage>
</organism>
<comment type="function">
    <text evidence="1">Inner capsid protein that self-assembles to form an icosahedral capsid with a T=2 symmetry, which consists of 120 copies of VP2, with channels at each of its five-fold vertices. This capsid constitutes the innermost concentric layer of the viral mature particle. It encapsidates the polymerase VP1, the capping enzyme VP3 and the genomic dsRNA, thereby defining the core. The innermost VP2 capsid and the intermediate VP6 capsid remain intact following cell entry to protect the dsRNA from degradation and to prevent unfavorable antiviral responses in the host cell during all the replication cycle of the virus. Nascent transcripts are transcribed within the structural confines of this double-layered particle (DLP) and are extruded through the channels formed by VP2 N-termini. VP2 is required for the replicase activity of VP1 polymerase. Probably recruits a copy of a VP1-VP3 complex, potentially along with a segment of plus-strand RNA, as a decamer of VP2 assembles. May activate the autoinhibited VP1/RNA complex to coordinate packaging and genome replication.</text>
</comment>
<comment type="subunit">
    <text evidence="1">Homodecamer; each decamer is made up of two conformers of VP2, called VP2A and VP2B. Interacts with a VP1-VP3 complex. Interacts with the intermediate capsid protein VP6. Interacts with NSP5. Interacts (via N-terminus) with NSP2.</text>
</comment>
<comment type="subcellular location">
    <subcellularLocation>
        <location evidence="1">Virion</location>
    </subcellularLocation>
    <text evidence="1">Inner capsid protein. Also found in spherical cytoplasmic structures, called virus factories, that appear early after infection and are the site of viral replication and packaging.</text>
</comment>
<comment type="domain">
    <text evidence="1">The N-terminus binds RNA. It is necessary for encapsidation of VP1 and VP3. The N-termini of 10 VP2 molecules form a cylindrical hub underneath each 5-fold axis of the inner capsid.</text>
</comment>
<comment type="PTM">
    <text evidence="1">Sumoylated with SUMO1 and SUMO2. Sumoylation of viral proteins seems to have a positive role on viral replication.</text>
</comment>
<comment type="similarity">
    <text evidence="1">Belongs to the rotavirus VP2 family.</text>
</comment>
<reference key="1">
    <citation type="journal article" date="2008" name="J. Virol.">
        <title>Full genome-based classification of rotaviruses reveals a common origin between human Wa-Like and porcine rotavirus strains and human DS-1-like and bovine rotavirus strains.</title>
        <authorList>
            <person name="Matthijnssens J."/>
            <person name="Ciarlet M."/>
            <person name="Heiman E.M."/>
            <person name="Arijs I."/>
            <person name="Delbeke T."/>
            <person name="McDonald S.M."/>
            <person name="Palombo E.A."/>
            <person name="Iturriza-Gomara M."/>
            <person name="Maes P."/>
            <person name="Patton J.T."/>
            <person name="Rahman M."/>
            <person name="Van Ranst M."/>
        </authorList>
    </citation>
    <scope>NUCLEOTIDE SEQUENCE [GENOMIC RNA]</scope>
</reference>
<feature type="chain" id="PRO_0000368064" description="Inner capsid protein VP2">
    <location>
        <begin position="1"/>
        <end position="896"/>
    </location>
</feature>
<feature type="region of interest" description="5-fold hub; involved in the encapsidation of VP1 and VP3" evidence="1">
    <location>
        <begin position="1"/>
        <end position="94"/>
    </location>
</feature>
<feature type="region of interest" description="Disordered" evidence="2">
    <location>
        <begin position="1"/>
        <end position="54"/>
    </location>
</feature>
<feature type="region of interest" description="Hydrophobic" evidence="1">
    <location>
        <begin position="410"/>
        <end position="430"/>
    </location>
</feature>
<feature type="region of interest" description="Hydrophobic" evidence="1">
    <location>
        <begin position="438"/>
        <end position="458"/>
    </location>
</feature>
<feature type="compositionally biased region" description="Basic and acidic residues" evidence="2">
    <location>
        <begin position="9"/>
        <end position="26"/>
    </location>
</feature>
<feature type="site" description="Interaction with the intermediate capsid protein VP6" evidence="1">
    <location>
        <position position="238"/>
    </location>
</feature>
<feature type="site" description="Interaction with the intermediate capsid protein VP6" evidence="1">
    <location>
        <position position="242"/>
    </location>
</feature>
<feature type="site" description="Interaction with the intermediate capsid protein VP6" evidence="1">
    <location>
        <position position="855"/>
    </location>
</feature>
<feature type="site" description="Interaction with the intermediate capsid protein VP6" evidence="1">
    <location>
        <position position="857"/>
    </location>
</feature>
<organismHost>
    <name type="scientific">Homo sapiens</name>
    <name type="common">Human</name>
    <dbReference type="NCBI Taxonomy" id="9606"/>
</organismHost>
<name>VP2_ROTHP</name>
<protein>
    <recommendedName>
        <fullName evidence="1">Inner capsid protein VP2</fullName>
    </recommendedName>
</protein>
<sequence length="896" mass="104590">MAYRKRGVKREDLPQQNERLQEKEIENNTDVTMENKDKNKNKNNNRKQQLSDKVLSQKEEIITDVQDDIKIADEVKKSSKEESKQLLEILKTKEDHQKEVQYEILQKTIPTFEPKESILKKLEDIRPEQAKKQMKLFRIFEPRQLPIYRANGEKELRNRWYWKLKKDTLPDGDYDVREYFLNLYDQILIEMPDYLLLKDMAVENKNSRDAGKVVDSETASICDAIFQDEETEGVIRRFIADMRQQVQADRNIVNYPSILHPIDHAFNEYFLNHQLVEPLNNEIIFNYIPERIRNDVNYILNMDMNLPSTARYIRPNLLQDRLNLHDNFESLWDTITTSNYILARSVVPDLKEKELVSTEAQIQKMSQDLQLEALTIQSETQFLAGINSQAANDCFKTLIAAMLSQRTMSLDFVTTNYMSLISGMWLLTVIPNDMFLRESLVACELAIINTIVYPAFGMQRMHYRNGDPQTPFQIAEQQIQNFQVANWLHFINNNRFRQVVIDGVLNQTLNDNIRNGQVINQLMEALMQLSRQQFPTMPVDYKRSIQRGILLLSNRLGQLVDLTRLLSYNYETLMACITMNMQHVQTLTTEKLQLTSVTSLCMLIGNTTVIPSPQTLFHYYNVNVNFHSNYNERINDAVAIITAANRLNLYQKKMKSIVEDFLKRLQIFDVPRVPDDQMYRLRDRLRLLPVERRRLDIFNLILMNMEQIERASDKIAQGVIIAYRDMQLERDEMYGFVNIARNLDGYQQINLEELMRTGDYGQITNMLLNNQPVALVGALPFVTDSSVISLIAKLDATVFAQIVKLRKVDTLKPILYKINSDSNDFYLVANYDWIPTSTTKVYKQVPQPFDFRASMHMLTSNLTFTVYSDLLSFVSADTVEPINAIAFDNMRIMNEL</sequence>
<evidence type="ECO:0000255" key="1">
    <source>
        <dbReference type="HAMAP-Rule" id="MF_04127"/>
    </source>
</evidence>
<evidence type="ECO:0000256" key="2">
    <source>
        <dbReference type="SAM" id="MobiDB-lite"/>
    </source>
</evidence>